<name>DCTD_BPMD2</name>
<reference key="1">
    <citation type="journal article" date="1998" name="J. Mol. Biol.">
        <title>Genome structure of mycobacteriophage D29: implications for phage evolution.</title>
        <authorList>
            <person name="Ford M.E."/>
            <person name="Sarkis G.J."/>
            <person name="Belanger A.E."/>
            <person name="Hendrix R.W."/>
            <person name="Hatfull G.F."/>
        </authorList>
    </citation>
    <scope>NUCLEOTIDE SEQUENCE [LARGE SCALE GENOMIC DNA]</scope>
</reference>
<reference key="2">
    <citation type="journal article" date="1997" name="Microbiology">
        <title>Mycobacteriophage D29 contains an integration system similar to that of the temperate mycobacteriophage L5.</title>
        <authorList>
            <person name="Ribeiro G."/>
            <person name="Viveiros M."/>
            <person name="David H.L."/>
            <person name="Costa J.V."/>
        </authorList>
    </citation>
    <scope>NUCLEOTIDE SEQUENCE [GENOMIC DNA] OF 51-128</scope>
</reference>
<dbReference type="EC" id="3.5.4.12"/>
<dbReference type="EMBL" id="AF022214">
    <property type="protein sequence ID" value="AAC18478.1"/>
    <property type="molecule type" value="Genomic_DNA"/>
</dbReference>
<dbReference type="EMBL" id="U81553">
    <property type="protein sequence ID" value="AAB69099.1"/>
    <property type="molecule type" value="Genomic_DNA"/>
</dbReference>
<dbReference type="PIR" id="C72804">
    <property type="entry name" value="C72804"/>
</dbReference>
<dbReference type="RefSeq" id="NP_046853.1">
    <property type="nucleotide sequence ID" value="NC_001900.1"/>
</dbReference>
<dbReference type="SMR" id="O22000"/>
<dbReference type="GeneID" id="1261565"/>
<dbReference type="KEGG" id="vg:1261565"/>
<dbReference type="OrthoDB" id="10605at10239"/>
<dbReference type="Proteomes" id="UP000002131">
    <property type="component" value="Segment"/>
</dbReference>
<dbReference type="GO" id="GO:0004132">
    <property type="term" value="F:dCMP deaminase activity"/>
    <property type="evidence" value="ECO:0007669"/>
    <property type="project" value="UniProtKB-EC"/>
</dbReference>
<dbReference type="GO" id="GO:0008270">
    <property type="term" value="F:zinc ion binding"/>
    <property type="evidence" value="ECO:0007669"/>
    <property type="project" value="InterPro"/>
</dbReference>
<dbReference type="GO" id="GO:0009972">
    <property type="term" value="P:cytidine deamination"/>
    <property type="evidence" value="ECO:0007669"/>
    <property type="project" value="TreeGrafter"/>
</dbReference>
<dbReference type="GO" id="GO:0009165">
    <property type="term" value="P:nucleotide biosynthetic process"/>
    <property type="evidence" value="ECO:0007669"/>
    <property type="project" value="UniProtKB-KW"/>
</dbReference>
<dbReference type="GO" id="GO:0006220">
    <property type="term" value="P:pyrimidine nucleotide metabolic process"/>
    <property type="evidence" value="ECO:0007669"/>
    <property type="project" value="InterPro"/>
</dbReference>
<dbReference type="Gene3D" id="3.40.140.10">
    <property type="entry name" value="Cytidine Deaminase, domain 2"/>
    <property type="match status" value="1"/>
</dbReference>
<dbReference type="InterPro" id="IPR016192">
    <property type="entry name" value="APOBEC/CMP_deaminase_Zn-bd"/>
</dbReference>
<dbReference type="InterPro" id="IPR002125">
    <property type="entry name" value="CMP_dCMP_dom"/>
</dbReference>
<dbReference type="InterPro" id="IPR016193">
    <property type="entry name" value="Cytidine_deaminase-like"/>
</dbReference>
<dbReference type="InterPro" id="IPR016473">
    <property type="entry name" value="dCMP_deaminase"/>
</dbReference>
<dbReference type="InterPro" id="IPR015517">
    <property type="entry name" value="dCMP_deaminase-rel"/>
</dbReference>
<dbReference type="PANTHER" id="PTHR11086:SF18">
    <property type="entry name" value="DEOXYCYTIDYLATE DEAMINASE"/>
    <property type="match status" value="1"/>
</dbReference>
<dbReference type="PANTHER" id="PTHR11086">
    <property type="entry name" value="DEOXYCYTIDYLATE DEAMINASE-RELATED"/>
    <property type="match status" value="1"/>
</dbReference>
<dbReference type="Pfam" id="PF00383">
    <property type="entry name" value="dCMP_cyt_deam_1"/>
    <property type="match status" value="1"/>
</dbReference>
<dbReference type="PIRSF" id="PIRSF006019">
    <property type="entry name" value="dCMP_deaminase"/>
    <property type="match status" value="1"/>
</dbReference>
<dbReference type="SUPFAM" id="SSF53927">
    <property type="entry name" value="Cytidine deaminase-like"/>
    <property type="match status" value="1"/>
</dbReference>
<dbReference type="PROSITE" id="PS00903">
    <property type="entry name" value="CYT_DCMP_DEAMINASES_1"/>
    <property type="match status" value="1"/>
</dbReference>
<dbReference type="PROSITE" id="PS51747">
    <property type="entry name" value="CYT_DCMP_DEAMINASES_2"/>
    <property type="match status" value="1"/>
</dbReference>
<feature type="chain" id="PRO_0000171698" description="Deoxycytidylate deaminase">
    <location>
        <begin position="1"/>
        <end position="128"/>
    </location>
</feature>
<feature type="domain" description="CMP/dCMP-type deaminase" evidence="2">
    <location>
        <begin position="5"/>
        <end position="128"/>
    </location>
</feature>
<feature type="active site" description="Proton donor" evidence="1">
    <location>
        <position position="83"/>
    </location>
</feature>
<feature type="binding site" evidence="1">
    <location>
        <position position="81"/>
    </location>
    <ligand>
        <name>Zn(2+)</name>
        <dbReference type="ChEBI" id="CHEBI:29105"/>
        <note>catalytic</note>
    </ligand>
</feature>
<feature type="binding site" evidence="1">
    <location>
        <position position="107"/>
    </location>
    <ligand>
        <name>Zn(2+)</name>
        <dbReference type="ChEBI" id="CHEBI:29105"/>
        <note>catalytic</note>
    </ligand>
</feature>
<feature type="binding site" evidence="1">
    <location>
        <position position="110"/>
    </location>
    <ligand>
        <name>Zn(2+)</name>
        <dbReference type="ChEBI" id="CHEBI:29105"/>
        <note>catalytic</note>
    </ligand>
</feature>
<keyword id="KW-0378">Hydrolase</keyword>
<keyword id="KW-0479">Metal-binding</keyword>
<keyword id="KW-0545">Nucleotide biosynthesis</keyword>
<keyword id="KW-1185">Reference proteome</keyword>
<keyword id="KW-0862">Zinc</keyword>
<evidence type="ECO:0000250" key="1"/>
<evidence type="ECO:0000255" key="2">
    <source>
        <dbReference type="PROSITE-ProRule" id="PRU01083"/>
    </source>
</evidence>
<evidence type="ECO:0000305" key="3"/>
<proteinExistence type="inferred from homology"/>
<organismHost>
    <name type="scientific">Mycobacterium</name>
    <dbReference type="NCBI Taxonomy" id="1763"/>
</organismHost>
<gene>
    <name type="primary">36.1</name>
    <name type="synonym">G1</name>
</gene>
<organism>
    <name type="scientific">Mycobacterium phage D29</name>
    <name type="common">Mycobacteriophage D29</name>
    <dbReference type="NCBI Taxonomy" id="28369"/>
    <lineage>
        <taxon>Viruses</taxon>
        <taxon>Duplodnaviria</taxon>
        <taxon>Heunggongvirae</taxon>
        <taxon>Uroviricota</taxon>
        <taxon>Caudoviricetes</taxon>
        <taxon>Fromanvirus</taxon>
    </lineage>
</organism>
<comment type="catalytic activity">
    <reaction>
        <text>dCMP + H2O + H(+) = dUMP + NH4(+)</text>
        <dbReference type="Rhea" id="RHEA:22924"/>
        <dbReference type="ChEBI" id="CHEBI:15377"/>
        <dbReference type="ChEBI" id="CHEBI:15378"/>
        <dbReference type="ChEBI" id="CHEBI:28938"/>
        <dbReference type="ChEBI" id="CHEBI:57566"/>
        <dbReference type="ChEBI" id="CHEBI:246422"/>
        <dbReference type="EC" id="3.5.4.12"/>
    </reaction>
</comment>
<comment type="similarity">
    <text evidence="3">Belongs to the cytidine and deoxycytidylate deaminase family.</text>
</comment>
<sequence length="128" mass="13539">MSRPDWDEYFLGIATAAAQRSDCERSKVGAVVVKDRRVRGTGYNGAPAGAAGCSTCPRRLSGAVPGVSDYSSGATRCVAVHAEANALLYCDREDLIGATLYVTREPCYACSNLIAASGIERVVYPKES</sequence>
<accession>O22000</accession>
<protein>
    <recommendedName>
        <fullName>Deoxycytidylate deaminase</fullName>
        <ecNumber>3.5.4.12</ecNumber>
    </recommendedName>
    <alternativeName>
        <fullName>dCMP deaminase</fullName>
    </alternativeName>
</protein>